<reference key="1">
    <citation type="journal article" date="2000" name="J. Mol. Evol.">
        <title>The structure and gene repertoire of an ancient red algal plastid genome.</title>
        <authorList>
            <person name="Gloeckner G."/>
            <person name="Rosenthal A."/>
            <person name="Valentin K.-U."/>
        </authorList>
    </citation>
    <scope>NUCLEOTIDE SEQUENCE [LARGE SCALE GENOMIC DNA]</scope>
    <source>
        <strain>RK-1</strain>
    </source>
</reference>
<dbReference type="EMBL" id="AF022186">
    <property type="protein sequence ID" value="AAB82668.1"/>
    <property type="molecule type" value="Genomic_DNA"/>
</dbReference>
<dbReference type="PIR" id="T11989">
    <property type="entry name" value="T11989"/>
</dbReference>
<dbReference type="RefSeq" id="NP_045093.1">
    <property type="nucleotide sequence ID" value="NC_001840.1"/>
</dbReference>
<dbReference type="SMR" id="O19921"/>
<dbReference type="GeneID" id="800221"/>
<dbReference type="UniPathway" id="UPA00094"/>
<dbReference type="GO" id="GO:0009507">
    <property type="term" value="C:chloroplast"/>
    <property type="evidence" value="ECO:0007669"/>
    <property type="project" value="UniProtKB-SubCell"/>
</dbReference>
<dbReference type="GO" id="GO:0005829">
    <property type="term" value="C:cytosol"/>
    <property type="evidence" value="ECO:0007669"/>
    <property type="project" value="TreeGrafter"/>
</dbReference>
<dbReference type="GO" id="GO:0016020">
    <property type="term" value="C:membrane"/>
    <property type="evidence" value="ECO:0007669"/>
    <property type="project" value="GOC"/>
</dbReference>
<dbReference type="GO" id="GO:0000035">
    <property type="term" value="F:acyl binding"/>
    <property type="evidence" value="ECO:0007669"/>
    <property type="project" value="TreeGrafter"/>
</dbReference>
<dbReference type="GO" id="GO:0000036">
    <property type="term" value="F:acyl carrier activity"/>
    <property type="evidence" value="ECO:0007669"/>
    <property type="project" value="UniProtKB-UniRule"/>
</dbReference>
<dbReference type="GO" id="GO:0009245">
    <property type="term" value="P:lipid A biosynthetic process"/>
    <property type="evidence" value="ECO:0007669"/>
    <property type="project" value="TreeGrafter"/>
</dbReference>
<dbReference type="FunFam" id="1.10.1200.10:FF:000003">
    <property type="entry name" value="Acyl carrier protein"/>
    <property type="match status" value="1"/>
</dbReference>
<dbReference type="Gene3D" id="1.10.1200.10">
    <property type="entry name" value="ACP-like"/>
    <property type="match status" value="1"/>
</dbReference>
<dbReference type="HAMAP" id="MF_01217">
    <property type="entry name" value="Acyl_carrier"/>
    <property type="match status" value="1"/>
</dbReference>
<dbReference type="InterPro" id="IPR003231">
    <property type="entry name" value="ACP"/>
</dbReference>
<dbReference type="InterPro" id="IPR036736">
    <property type="entry name" value="ACP-like_sf"/>
</dbReference>
<dbReference type="InterPro" id="IPR009081">
    <property type="entry name" value="PP-bd_ACP"/>
</dbReference>
<dbReference type="NCBIfam" id="TIGR00517">
    <property type="entry name" value="acyl_carrier"/>
    <property type="match status" value="1"/>
</dbReference>
<dbReference type="NCBIfam" id="NF002148">
    <property type="entry name" value="PRK00982.1-2"/>
    <property type="match status" value="1"/>
</dbReference>
<dbReference type="NCBIfam" id="NF002150">
    <property type="entry name" value="PRK00982.1-4"/>
    <property type="match status" value="1"/>
</dbReference>
<dbReference type="PANTHER" id="PTHR20863">
    <property type="entry name" value="ACYL CARRIER PROTEIN"/>
    <property type="match status" value="1"/>
</dbReference>
<dbReference type="PANTHER" id="PTHR20863:SF76">
    <property type="entry name" value="CARRIER DOMAIN-CONTAINING PROTEIN"/>
    <property type="match status" value="1"/>
</dbReference>
<dbReference type="Pfam" id="PF00550">
    <property type="entry name" value="PP-binding"/>
    <property type="match status" value="1"/>
</dbReference>
<dbReference type="SUPFAM" id="SSF47336">
    <property type="entry name" value="ACP-like"/>
    <property type="match status" value="1"/>
</dbReference>
<dbReference type="PROSITE" id="PS50075">
    <property type="entry name" value="CARRIER"/>
    <property type="match status" value="1"/>
</dbReference>
<organism>
    <name type="scientific">Cyanidium caldarium</name>
    <name type="common">Red alga</name>
    <dbReference type="NCBI Taxonomy" id="2771"/>
    <lineage>
        <taxon>Eukaryota</taxon>
        <taxon>Rhodophyta</taxon>
        <taxon>Bangiophyceae</taxon>
        <taxon>Cyanidiales</taxon>
        <taxon>Cyanidiaceae</taxon>
        <taxon>Cyanidium</taxon>
    </lineage>
</organism>
<feature type="chain" id="PRO_0000180229" description="Acyl carrier protein">
    <location>
        <begin position="1"/>
        <end position="86"/>
    </location>
</feature>
<feature type="domain" description="Carrier" evidence="2">
    <location>
        <begin position="5"/>
        <end position="80"/>
    </location>
</feature>
<feature type="modified residue" description="O-(pantetheine 4'-phosphoryl)serine" evidence="2">
    <location>
        <position position="40"/>
    </location>
</feature>
<accession>O19921</accession>
<geneLocation type="chloroplast"/>
<sequence length="86" mass="9589">MVTKEEILKKVQSIVSEQLGISKEQVLVDSHFTNDLGADSLDNVELVMAIEEEFNIVISDIDAEKISNVREAVEFIIDKINNKANA</sequence>
<evidence type="ECO:0000255" key="1">
    <source>
        <dbReference type="HAMAP-Rule" id="MF_01217"/>
    </source>
</evidence>
<evidence type="ECO:0000255" key="2">
    <source>
        <dbReference type="PROSITE-ProRule" id="PRU00258"/>
    </source>
</evidence>
<keyword id="KW-0150">Chloroplast</keyword>
<keyword id="KW-0275">Fatty acid biosynthesis</keyword>
<keyword id="KW-0276">Fatty acid metabolism</keyword>
<keyword id="KW-0444">Lipid biosynthesis</keyword>
<keyword id="KW-0443">Lipid metabolism</keyword>
<keyword id="KW-0596">Phosphopantetheine</keyword>
<keyword id="KW-0597">Phosphoprotein</keyword>
<keyword id="KW-0934">Plastid</keyword>
<comment type="function">
    <text evidence="1">Carrier of the growing fatty acid chain in fatty acid biosynthesis.</text>
</comment>
<comment type="pathway">
    <text evidence="1">Lipid metabolism; fatty acid biosynthesis.</text>
</comment>
<comment type="subcellular location">
    <subcellularLocation>
        <location>Plastid</location>
        <location>Chloroplast</location>
    </subcellularLocation>
</comment>
<comment type="PTM">
    <text evidence="1">4'-phosphopantetheine is transferred from CoA to a specific serine of apo-ACP by AcpS. This modification is essential for activity because fatty acids are bound in thioester linkage to the sulfhydryl of the prosthetic group.</text>
</comment>
<comment type="similarity">
    <text evidence="1">Belongs to the acyl carrier protein (ACP) family.</text>
</comment>
<gene>
    <name evidence="1" type="primary">acpP</name>
</gene>
<proteinExistence type="inferred from homology"/>
<protein>
    <recommendedName>
        <fullName evidence="1">Acyl carrier protein</fullName>
        <shortName evidence="1">ACP</shortName>
    </recommendedName>
</protein>
<name>ACP_CYACA</name>